<proteinExistence type="evidence at protein level"/>
<comment type="function">
    <text evidence="3">Seems to be a major component of sperm tail outer dense fibers (ODF). ODFs are filamentous structures located on the outside of the axoneme in the midpiece and principal piece of the mammalian sperm tail and may help to maintain the passive elastic structures and elastic recoil of the sperm tail. May have a modulating influence on sperm motility. Functions as a general scaffold protein that is specifically localized at the distal/subdistal appendages of mother centrioles. Component of the centrosome matrix required for the localization of PLK1 and NIN to the centrosomes. Required for the formation and/or maintenance of normal CETN1 assembly.</text>
</comment>
<comment type="subunit">
    <text evidence="1 3 7">Self-associates. Associates with microtubules and forms a fibrillar structure partially linked to the microtubule network. Interacts through its C-terminus with PLK1. Interacts with ODF1 (PubMed:9045620). Interacts with MARK4; the interaction is required for localization of ODF2 to centrioles (By similarity). Interacts with TSSK4 (By similarity). Interacts with AKNA (By similarity). Interacts with QRICH2 (By similarity). Interacts with CFAP58 (By similarity). Interacts with BBOF1 (By similarity). Interacts with CCDC38 (By similarity). Interacts with CCDC42 (By similarity).</text>
</comment>
<comment type="subcellular location">
    <subcellularLocation>
        <location evidence="6">Cytoplasm</location>
        <location evidence="6">Cytoskeleton</location>
        <location evidence="6">Microtubule organizing center</location>
        <location evidence="6">Centrosome</location>
    </subcellularLocation>
    <subcellularLocation>
        <location evidence="6">Cell projection</location>
        <location evidence="6">Cilium</location>
    </subcellularLocation>
    <subcellularLocation>
        <location evidence="6">Cytoplasm</location>
        <location evidence="6">Cytoskeleton</location>
        <location evidence="6">Microtubule organizing center</location>
        <location evidence="6">Centrosome</location>
        <location evidence="6">Centriole</location>
    </subcellularLocation>
    <subcellularLocation>
        <location evidence="6">Cytoplasm</location>
        <location evidence="6">Cytoskeleton</location>
        <location evidence="6">Spindle pole</location>
    </subcellularLocation>
    <subcellularLocation>
        <location evidence="1">Cell projection</location>
        <location evidence="1">Cilium</location>
        <location evidence="1">Flagellum</location>
    </subcellularLocation>
    <text evidence="1">Localized at the microtubule organizing centers in interphase and spindle poles in mitosis. Localized at the distal/subdistal appendages of mother centrioles.</text>
</comment>
<comment type="alternative products">
    <event type="alternative splicing"/>
    <isoform>
        <id>Q6AYX5-1</id>
        <name>1</name>
        <sequence type="displayed"/>
    </isoform>
    <isoform>
        <id>Q6AYX5-2</id>
        <name>2</name>
        <name>Cenexin 2</name>
        <sequence type="described" ref="VSP_027684 VSP_027685"/>
    </isoform>
    <isoform>
        <id>Q6AYX5-3</id>
        <name>3</name>
        <sequence type="described" ref="VSP_027678 VSP_027679 VSP_027682 VSP_027683"/>
    </isoform>
    <isoform>
        <id>Q6AYX5-4</id>
        <name>4</name>
        <sequence type="described" ref="VSP_027677 VSP_027679 VSP_027682 VSP_027683"/>
    </isoform>
    <isoform>
        <id>Q6AYX5-5</id>
        <name>5</name>
        <sequence type="described" ref="VSP_027677 VSP_027679 VSP_027680 VSP_027681 VSP_027683"/>
    </isoform>
</comment>
<comment type="tissue specificity">
    <text evidence="7 8 9 10">Testis-specific (PubMed:9045620). Expressed in the proximal compartment of the elongated spermatid tail; later expression progresses to the distal spermatid tail compartment located in the lumen of the seminiferous epithelium (PubMed:9698445). In spermatids (stages II-III) expression of the tails peaks and remains strong during the remaining steps of spermiogenesis (at protein level) (PubMed:9698445). Expression correlates with the onset of spermatogenesis and is first detected at 30 days. Higher expression is seen in testis of 40-day-old and adults that are older than 50 days (PubMed:9092585). No expression is seen in 10- and 20-day-old testes (PubMed:9092585).</text>
</comment>
<comment type="PTM">
    <text evidence="1 2">Tyrosine phosphorylated. Phosphorylated on Ser-90 by TSSK4.</text>
</comment>
<comment type="similarity">
    <text evidence="16">Belongs to the ODF2 family.</text>
</comment>
<comment type="sequence caution" evidence="16">
    <conflict type="frameshift">
        <sequence resource="EMBL-CDS" id="CAA64567"/>
    </conflict>
</comment>
<keyword id="KW-0025">Alternative splicing</keyword>
<keyword id="KW-0966">Cell projection</keyword>
<keyword id="KW-0969">Cilium</keyword>
<keyword id="KW-0175">Coiled coil</keyword>
<keyword id="KW-0963">Cytoplasm</keyword>
<keyword id="KW-0206">Cytoskeleton</keyword>
<keyword id="KW-0217">Developmental protein</keyword>
<keyword id="KW-0221">Differentiation</keyword>
<keyword id="KW-0282">Flagellum</keyword>
<keyword id="KW-1017">Isopeptide bond</keyword>
<keyword id="KW-0493">Microtubule</keyword>
<keyword id="KW-0597">Phosphoprotein</keyword>
<keyword id="KW-1185">Reference proteome</keyword>
<keyword id="KW-0744">Spermatogenesis</keyword>
<keyword id="KW-0832">Ubl conjugation</keyword>
<organism>
    <name type="scientific">Rattus norvegicus</name>
    <name type="common">Rat</name>
    <dbReference type="NCBI Taxonomy" id="10116"/>
    <lineage>
        <taxon>Eukaryota</taxon>
        <taxon>Metazoa</taxon>
        <taxon>Chordata</taxon>
        <taxon>Craniata</taxon>
        <taxon>Vertebrata</taxon>
        <taxon>Euteleostomi</taxon>
        <taxon>Mammalia</taxon>
        <taxon>Eutheria</taxon>
        <taxon>Euarchontoglires</taxon>
        <taxon>Glires</taxon>
        <taxon>Rodentia</taxon>
        <taxon>Myomorpha</taxon>
        <taxon>Muroidea</taxon>
        <taxon>Muridae</taxon>
        <taxon>Murinae</taxon>
        <taxon>Rattus</taxon>
    </lineage>
</organism>
<accession>Q6AYX5</accession>
<accession>O70408</accession>
<accession>P97575</accession>
<accession>Q62693</accession>
<accession>Q9JIZ3</accession>
<sequence length="825" mass="95440">MKDRSSTPPLHVHVDENTPVHVHIKKLPKPSAASSQKSHKRGMKGDTVNVRRSVRVKTKVPWMPPGKSSARHVGCKWENPPHCLEITPPSSEKLVSVMRLSDLSTEDDDSGHCKMNRYDKKIDSLMNAVGCLKSEVKMQKGERQMAKRFLEERKEELEEVAHELAETEHENTVLRHNIERIKEEKDFTMLQKKHLQQEKECLMSKLVEAEMDGAAAAKQVMALKDTIGKLKTEKQMTCTDINTLTRQKELLLQKLSTFEETNRTLRDLLREQHCKEDSERLMEQQGALLKRLAEADSEKARLLLLLQDKDKEVEELLQEIQCEKAQAKTASELSKSMESMRGHLQAQLRCKEAENSRLCMQIKNLERSGNQHKAEVEAIMEQLKELKQKGDRDKETLKKAIRAQKERAEKSEEYAEQLHVQLADKDLYVAEALSTLESWRSRYNQVVKDKGDLELEIIVLNDRVTDLVNQQQSLEEKMREDRDSLVERLHRQTAEYSAFKLENERLKASFAPMEDKLNQAHLEVQQLKASVKNYEGMIDNYKSQVMKTRLEADEVAAQLERCDKENKMLKDEMNKEIEAARRQFQSQLADLQQLPDILKITEAKLAECQDQLQGYERKNIDLTAIISDLRSRIEHQGDKLELAREKHQASQKENKQLSQKVDELERKLEATSTQNVEFLQVIAKREEAIHQAQLRLEEKTRECGSLARQLESAIEDARRQVEQTKEQALSKERAAQSKILDLETQLSRTKTELGQLRRTRDDVDRRYQSRLQDLKDRLEQSESTNRSMQNYVQFLKSSYANVFGDGPYTSSYLTSSPIRSRSPPA</sequence>
<feature type="chain" id="PRO_0000299460" description="Outer dense fiber protein 2">
    <location>
        <begin position="1"/>
        <end position="825"/>
    </location>
</feature>
<feature type="region of interest" description="Disordered" evidence="5">
    <location>
        <begin position="27"/>
        <end position="46"/>
    </location>
</feature>
<feature type="region of interest" description="Interaction with BBOF1" evidence="1">
    <location>
        <begin position="532"/>
        <end position="696"/>
    </location>
</feature>
<feature type="coiled-coil region" evidence="4">
    <location>
        <begin position="139"/>
        <end position="212"/>
    </location>
</feature>
<feature type="coiled-coil region" evidence="4">
    <location>
        <begin position="240"/>
        <end position="418"/>
    </location>
</feature>
<feature type="coiled-coil region" evidence="4">
    <location>
        <begin position="456"/>
        <end position="793"/>
    </location>
</feature>
<feature type="modified residue" description="Phosphoserine" evidence="17">
    <location>
        <position position="68"/>
    </location>
</feature>
<feature type="modified residue" description="Phosphoserine" evidence="17">
    <location>
        <position position="69"/>
    </location>
</feature>
<feature type="modified residue" description="Phosphothreonine" evidence="17">
    <location>
        <position position="87"/>
    </location>
</feature>
<feature type="modified residue" description="Phosphoserine; by TSSK4" evidence="1">
    <location>
        <position position="90"/>
    </location>
</feature>
<feature type="modified residue" description="Phosphoserine" evidence="17">
    <location>
        <position position="101"/>
    </location>
</feature>
<feature type="modified residue" description="Phosphoserine" evidence="17">
    <location>
        <position position="104"/>
    </location>
</feature>
<feature type="modified residue" description="Phosphothreonine" evidence="17">
    <location>
        <position position="105"/>
    </location>
</feature>
<feature type="modified residue" description="Phosphoserine" evidence="17">
    <location>
        <position position="110"/>
    </location>
</feature>
<feature type="modified residue" description="Phosphoserine" evidence="17">
    <location>
        <position position="124"/>
    </location>
</feature>
<feature type="modified residue" description="Phosphoserine" evidence="17">
    <location>
        <position position="134"/>
    </location>
</feature>
<feature type="modified residue" description="Phosphothreonine" evidence="3">
    <location>
        <position position="226"/>
    </location>
</feature>
<feature type="modified residue" description="Phosphoserine" evidence="17">
    <location>
        <position position="256"/>
    </location>
</feature>
<feature type="modified residue" description="Phosphoserine" evidence="17">
    <location>
        <position position="627"/>
    </location>
</feature>
<feature type="cross-link" description="Glycyl lysine isopeptide (Lys-Gly) (interchain with G-Cter in SUMO2)" evidence="3">
    <location>
        <position position="133"/>
    </location>
</feature>
<feature type="splice variant" id="VSP_027677" description="In isoform 4 and isoform 5." evidence="12 13">
    <location>
        <begin position="1"/>
        <end position="42"/>
    </location>
</feature>
<feature type="splice variant" id="VSP_027678" description="In isoform 3." evidence="11 14">
    <original>MKDRSSTPPLHVHVDENTPVHVHIKKLPKPSAASSQ</original>
    <variation>MSASSSGGSPRFPSCGKNGVTSLTQKKVLRTPCGAPSVTVT</variation>
    <location>
        <begin position="1"/>
        <end position="36"/>
    </location>
</feature>
<feature type="splice variant" id="VSP_027679" description="In isoform 3, isoform 4 and isoform 5." evidence="11 12 13 14">
    <location>
        <begin position="60"/>
        <end position="78"/>
    </location>
</feature>
<feature type="splice variant" id="VSP_027680" description="In isoform 5." evidence="13">
    <original>E</original>
    <variation>ELCLKVPECARQHRPGRERQEDCQ</variation>
    <location>
        <position position="276"/>
    </location>
</feature>
<feature type="splice variant" id="VSP_027681" description="In isoform 5." evidence="13">
    <original>RSRIEHQGDKLELAREKHQASQK</original>
    <variation>HSRVRDWQKGSHELARAGARLPR</variation>
    <location>
        <begin position="630"/>
        <end position="652"/>
    </location>
</feature>
<feature type="splice variant" id="VSP_027682" description="In isoform 3 and isoform 4." evidence="11 12 14">
    <original>IEHQGDKLELAREKHQASQK</original>
    <variation>VRDWQKGSHELARAGARLPR</variation>
    <location>
        <begin position="633"/>
        <end position="652"/>
    </location>
</feature>
<feature type="splice variant" id="VSP_027683" description="In isoform 3, isoform 4 and isoform 5." evidence="11 12 13 14">
    <location>
        <begin position="653"/>
        <end position="825"/>
    </location>
</feature>
<feature type="splice variant" id="VSP_027684" description="In isoform 2." evidence="15">
    <original>VDRRYQS</original>
    <variation>ENQKCWK</variation>
    <location>
        <begin position="763"/>
        <end position="769"/>
    </location>
</feature>
<feature type="splice variant" id="VSP_027685" description="In isoform 2." evidence="15">
    <location>
        <begin position="770"/>
        <end position="825"/>
    </location>
</feature>
<feature type="sequence conflict" description="In Ref. 2; AAC53134." evidence="16" ref="2">
    <original>D</original>
    <variation>Y</variation>
    <location>
        <position position="46"/>
    </location>
</feature>
<feature type="sequence conflict" description="In Ref. 1; CAA64567." evidence="16" ref="1">
    <original>DD</original>
    <variation>EE</variation>
    <location>
        <begin position="107"/>
        <end position="108"/>
    </location>
</feature>
<feature type="sequence conflict" description="In Ref. 2; AAC53134." evidence="16" ref="2">
    <original>K</original>
    <variation>E</variation>
    <location>
        <position position="120"/>
    </location>
</feature>
<feature type="sequence conflict" description="In Ref. 2; AAC53134." evidence="16" ref="2">
    <original>D</original>
    <variation>H</variation>
    <location>
        <position position="483"/>
    </location>
</feature>
<feature type="sequence conflict" description="In Ref. 3; AAC08408." evidence="16" ref="3">
    <original>A</original>
    <variation>P</variation>
    <location>
        <position position="511"/>
    </location>
</feature>
<feature type="sequence conflict" description="In Ref. 1; CAA64567." evidence="16" ref="1">
    <original>S</original>
    <variation>T</variation>
    <location>
        <position position="543"/>
    </location>
</feature>
<feature type="modified residue" description="Phosphoserine" evidence="17">
    <location sequence="Q6AYX5-3">
        <position position="22"/>
    </location>
</feature>
<feature type="modified residue" description="Phosphoserine" evidence="17">
    <location sequence="Q6AYX5-3">
        <position position="37"/>
    </location>
</feature>
<feature type="sequence conflict" description="In Ref. 3; AAC08408." evidence="16" ref="3">
    <original>Q</original>
    <variation>E</variation>
    <location sequence="Q6AYX5-3">
        <position position="25"/>
    </location>
</feature>
<reference key="1">
    <citation type="journal article" date="1997" name="Biol. Reprod.">
        <title>Expression cloning of a rat testicular transcript abundant in germ cells, which contains two leucine zipper motifs.</title>
        <authorList>
            <person name="Turner K.J."/>
            <person name="Sharpe R.M."/>
            <person name="Gaughan J."/>
            <person name="Millar M.R."/>
            <person name="Foster P.M."/>
            <person name="Saunders P.T."/>
        </authorList>
    </citation>
    <scope>NUCLEOTIDE SEQUENCE [MRNA] (ISOFORM 5)</scope>
    <scope>TISSUE SPECIFICITY</scope>
    <scope>ALTERNATIVE SPLICING</scope>
    <source>
        <tissue>Testis</tissue>
    </source>
</reference>
<reference key="2">
    <citation type="journal article" date="1997" name="J. Biol. Chem.">
        <title>Identification and characterization of new cDNAs encoding outer dense fiber proteins of rat sperm.</title>
        <authorList>
            <person name="Brohmann H."/>
            <person name="Pinnecke S."/>
            <person name="Hoyer-Fender S."/>
        </authorList>
    </citation>
    <scope>NUCLEOTIDE SEQUENCE [MRNA] (ISOFORM 4)</scope>
    <scope>TISSUE SPECIFICITY</scope>
    <scope>ALTERNATIVE SPLICING</scope>
    <source>
        <strain>Sprague-Dawley</strain>
        <tissue>Spermatid</tissue>
    </source>
</reference>
<reference key="3">
    <citation type="journal article" date="1998" name="Dev. Biol.">
        <title>Developmental expression of the 84-kDa ODF sperm protein: localization to both the cortex and medulla of outer dense fibers and to the connecting piece.</title>
        <authorList>
            <person name="Schalles U."/>
            <person name="Shao X."/>
            <person name="van der Hoorn F.A."/>
            <person name="Oko R."/>
        </authorList>
    </citation>
    <scope>NUCLEOTIDE SEQUENCE [MRNA] (ISOFORM 3)</scope>
    <scope>TISSUE SPECIFICITY</scope>
    <source>
        <tissue>Testis</tissue>
    </source>
</reference>
<reference key="4">
    <citation type="submission" date="2001-12" db="EMBL/GenBank/DDBJ databases">
        <title>Cenexin - a molecular scaffolding protein with dual functions in the mammalian centrosome and sperm tail.</title>
        <authorList>
            <person name="March P."/>
            <person name="Sibley K.D."/>
            <person name="Scott V."/>
            <person name="Lange B.M.H."/>
            <person name="Taylor S.S."/>
            <person name="Gull K."/>
        </authorList>
    </citation>
    <scope>NUCLEOTIDE SEQUENCE [MRNA] (ISOFORM 2)</scope>
</reference>
<reference key="5">
    <citation type="journal article" date="2004" name="Nature">
        <title>Genome sequence of the Brown Norway rat yields insights into mammalian evolution.</title>
        <authorList>
            <person name="Gibbs R.A."/>
            <person name="Weinstock G.M."/>
            <person name="Metzker M.L."/>
            <person name="Muzny D.M."/>
            <person name="Sodergren E.J."/>
            <person name="Scherer S."/>
            <person name="Scott G."/>
            <person name="Steffen D."/>
            <person name="Worley K.C."/>
            <person name="Burch P.E."/>
            <person name="Okwuonu G."/>
            <person name="Hines S."/>
            <person name="Lewis L."/>
            <person name="Deramo C."/>
            <person name="Delgado O."/>
            <person name="Dugan-Rocha S."/>
            <person name="Miner G."/>
            <person name="Morgan M."/>
            <person name="Hawes A."/>
            <person name="Gill R."/>
            <person name="Holt R.A."/>
            <person name="Adams M.D."/>
            <person name="Amanatides P.G."/>
            <person name="Baden-Tillson H."/>
            <person name="Barnstead M."/>
            <person name="Chin S."/>
            <person name="Evans C.A."/>
            <person name="Ferriera S."/>
            <person name="Fosler C."/>
            <person name="Glodek A."/>
            <person name="Gu Z."/>
            <person name="Jennings D."/>
            <person name="Kraft C.L."/>
            <person name="Nguyen T."/>
            <person name="Pfannkoch C.M."/>
            <person name="Sitter C."/>
            <person name="Sutton G.G."/>
            <person name="Venter J.C."/>
            <person name="Woodage T."/>
            <person name="Smith D."/>
            <person name="Lee H.-M."/>
            <person name="Gustafson E."/>
            <person name="Cahill P."/>
            <person name="Kana A."/>
            <person name="Doucette-Stamm L."/>
            <person name="Weinstock K."/>
            <person name="Fechtel K."/>
            <person name="Weiss R.B."/>
            <person name="Dunn D.M."/>
            <person name="Green E.D."/>
            <person name="Blakesley R.W."/>
            <person name="Bouffard G.G."/>
            <person name="De Jong P.J."/>
            <person name="Osoegawa K."/>
            <person name="Zhu B."/>
            <person name="Marra M."/>
            <person name="Schein J."/>
            <person name="Bosdet I."/>
            <person name="Fjell C."/>
            <person name="Jones S."/>
            <person name="Krzywinski M."/>
            <person name="Mathewson C."/>
            <person name="Siddiqui A."/>
            <person name="Wye N."/>
            <person name="McPherson J."/>
            <person name="Zhao S."/>
            <person name="Fraser C.M."/>
            <person name="Shetty J."/>
            <person name="Shatsman S."/>
            <person name="Geer K."/>
            <person name="Chen Y."/>
            <person name="Abramzon S."/>
            <person name="Nierman W.C."/>
            <person name="Havlak P.H."/>
            <person name="Chen R."/>
            <person name="Durbin K.J."/>
            <person name="Egan A."/>
            <person name="Ren Y."/>
            <person name="Song X.-Z."/>
            <person name="Li B."/>
            <person name="Liu Y."/>
            <person name="Qin X."/>
            <person name="Cawley S."/>
            <person name="Cooney A.J."/>
            <person name="D'Souza L.M."/>
            <person name="Martin K."/>
            <person name="Wu J.Q."/>
            <person name="Gonzalez-Garay M.L."/>
            <person name="Jackson A.R."/>
            <person name="Kalafus K.J."/>
            <person name="McLeod M.P."/>
            <person name="Milosavljevic A."/>
            <person name="Virk D."/>
            <person name="Volkov A."/>
            <person name="Wheeler D.A."/>
            <person name="Zhang Z."/>
            <person name="Bailey J.A."/>
            <person name="Eichler E.E."/>
            <person name="Tuzun E."/>
            <person name="Birney E."/>
            <person name="Mongin E."/>
            <person name="Ureta-Vidal A."/>
            <person name="Woodwark C."/>
            <person name="Zdobnov E."/>
            <person name="Bork P."/>
            <person name="Suyama M."/>
            <person name="Torrents D."/>
            <person name="Alexandersson M."/>
            <person name="Trask B.J."/>
            <person name="Young J.M."/>
            <person name="Huang H."/>
            <person name="Wang H."/>
            <person name="Xing H."/>
            <person name="Daniels S."/>
            <person name="Gietzen D."/>
            <person name="Schmidt J."/>
            <person name="Stevens K."/>
            <person name="Vitt U."/>
            <person name="Wingrove J."/>
            <person name="Camara F."/>
            <person name="Mar Alba M."/>
            <person name="Abril J.F."/>
            <person name="Guigo R."/>
            <person name="Smit A."/>
            <person name="Dubchak I."/>
            <person name="Rubin E.M."/>
            <person name="Couronne O."/>
            <person name="Poliakov A."/>
            <person name="Huebner N."/>
            <person name="Ganten D."/>
            <person name="Goesele C."/>
            <person name="Hummel O."/>
            <person name="Kreitler T."/>
            <person name="Lee Y.-A."/>
            <person name="Monti J."/>
            <person name="Schulz H."/>
            <person name="Zimdahl H."/>
            <person name="Himmelbauer H."/>
            <person name="Lehrach H."/>
            <person name="Jacob H.J."/>
            <person name="Bromberg S."/>
            <person name="Gullings-Handley J."/>
            <person name="Jensen-Seaman M.I."/>
            <person name="Kwitek A.E."/>
            <person name="Lazar J."/>
            <person name="Pasko D."/>
            <person name="Tonellato P.J."/>
            <person name="Twigger S."/>
            <person name="Ponting C.P."/>
            <person name="Duarte J.M."/>
            <person name="Rice S."/>
            <person name="Goodstadt L."/>
            <person name="Beatson S.A."/>
            <person name="Emes R.D."/>
            <person name="Winter E.E."/>
            <person name="Webber C."/>
            <person name="Brandt P."/>
            <person name="Nyakatura G."/>
            <person name="Adetobi M."/>
            <person name="Chiaromonte F."/>
            <person name="Elnitski L."/>
            <person name="Eswara P."/>
            <person name="Hardison R.C."/>
            <person name="Hou M."/>
            <person name="Kolbe D."/>
            <person name="Makova K."/>
            <person name="Miller W."/>
            <person name="Nekrutenko A."/>
            <person name="Riemer C."/>
            <person name="Schwartz S."/>
            <person name="Taylor J."/>
            <person name="Yang S."/>
            <person name="Zhang Y."/>
            <person name="Lindpaintner K."/>
            <person name="Andrews T.D."/>
            <person name="Caccamo M."/>
            <person name="Clamp M."/>
            <person name="Clarke L."/>
            <person name="Curwen V."/>
            <person name="Durbin R.M."/>
            <person name="Eyras E."/>
            <person name="Searle S.M."/>
            <person name="Cooper G.M."/>
            <person name="Batzoglou S."/>
            <person name="Brudno M."/>
            <person name="Sidow A."/>
            <person name="Stone E.A."/>
            <person name="Payseur B.A."/>
            <person name="Bourque G."/>
            <person name="Lopez-Otin C."/>
            <person name="Puente X.S."/>
            <person name="Chakrabarti K."/>
            <person name="Chatterji S."/>
            <person name="Dewey C."/>
            <person name="Pachter L."/>
            <person name="Bray N."/>
            <person name="Yap V.B."/>
            <person name="Caspi A."/>
            <person name="Tesler G."/>
            <person name="Pevzner P.A."/>
            <person name="Haussler D."/>
            <person name="Roskin K.M."/>
            <person name="Baertsch R."/>
            <person name="Clawson H."/>
            <person name="Furey T.S."/>
            <person name="Hinrichs A.S."/>
            <person name="Karolchik D."/>
            <person name="Kent W.J."/>
            <person name="Rosenbloom K.R."/>
            <person name="Trumbower H."/>
            <person name="Weirauch M."/>
            <person name="Cooper D.N."/>
            <person name="Stenson P.D."/>
            <person name="Ma B."/>
            <person name="Brent M."/>
            <person name="Arumugam M."/>
            <person name="Shteynberg D."/>
            <person name="Copley R.R."/>
            <person name="Taylor M.S."/>
            <person name="Riethman H."/>
            <person name="Mudunuri U."/>
            <person name="Peterson J."/>
            <person name="Guyer M."/>
            <person name="Felsenfeld A."/>
            <person name="Old S."/>
            <person name="Mockrin S."/>
            <person name="Collins F.S."/>
        </authorList>
    </citation>
    <scope>NUCLEOTIDE SEQUENCE [LARGE SCALE GENOMIC DNA]</scope>
    <source>
        <strain>Brown Norway</strain>
    </source>
</reference>
<reference key="6">
    <citation type="journal article" date="2004" name="Genome Res.">
        <title>The status, quality, and expansion of the NIH full-length cDNA project: the Mammalian Gene Collection (MGC).</title>
        <authorList>
            <consortium name="The MGC Project Team"/>
        </authorList>
    </citation>
    <scope>NUCLEOTIDE SEQUENCE [LARGE SCALE MRNA] (ISOFORM 3)</scope>
    <source>
        <tissue>Testis</tissue>
    </source>
</reference>
<reference key="7">
    <citation type="journal article" date="1997" name="J. Biol. Chem.">
        <title>Interactional cloning of the 84-kDa major outer dense fiber protein Odf84. Leucine zippers mediate associations of Odf84 and Odf27.</title>
        <authorList>
            <person name="Shao X."/>
            <person name="Tarnasky H.A."/>
            <person name="Schalles U."/>
            <person name="Oko R."/>
            <person name="van der Hoorn F.A."/>
        </authorList>
    </citation>
    <scope>INTERACTION WITH ODF1</scope>
    <scope>TISSUE SPECIFICITY</scope>
</reference>
<reference key="8">
    <citation type="journal article" date="2004" name="J. Cell Sci.">
        <title>Outer dense fibre protein 2 (ODF2) is a self-interacting centrosomal protein with affinity for microtubules.</title>
        <authorList>
            <person name="Donkor F.F."/>
            <person name="Monnich M."/>
            <person name="Czirr E."/>
            <person name="Hollemann T."/>
            <person name="Hoyer-Fender S."/>
        </authorList>
    </citation>
    <scope>SELF-ASSOCIATION</scope>
    <scope>SUBCELLULAR LOCATION</scope>
</reference>
<reference key="9">
    <citation type="journal article" date="2012" name="Nat. Commun.">
        <title>Quantitative maps of protein phosphorylation sites across 14 different rat organs and tissues.</title>
        <authorList>
            <person name="Lundby A."/>
            <person name="Secher A."/>
            <person name="Lage K."/>
            <person name="Nordsborg N.B."/>
            <person name="Dmytriyev A."/>
            <person name="Lundby C."/>
            <person name="Olsen J.V."/>
        </authorList>
    </citation>
    <scope>PHOSPHORYLATION [LARGE SCALE ANALYSIS] AT SER-68; SER-69; THR-87; SER-101; SER-104; THR-105; SER-110; SER-124; SER-134; SER-256 AND SER-627</scope>
    <scope>PHOSPHORYLATION [LARGE SCALE ANALYSIS] AT SER-22 AND SER-37 (ISOFORM 3)</scope>
    <scope>IDENTIFICATION BY MASS SPECTROMETRY [LARGE SCALE ANALYSIS]</scope>
</reference>
<evidence type="ECO:0000250" key="1">
    <source>
        <dbReference type="UniProtKB" id="A3KGV1"/>
    </source>
</evidence>
<evidence type="ECO:0000250" key="2">
    <source>
        <dbReference type="UniProtKB" id="Q2MJU7"/>
    </source>
</evidence>
<evidence type="ECO:0000250" key="3">
    <source>
        <dbReference type="UniProtKB" id="Q5BJF6"/>
    </source>
</evidence>
<evidence type="ECO:0000255" key="4"/>
<evidence type="ECO:0000256" key="5">
    <source>
        <dbReference type="SAM" id="MobiDB-lite"/>
    </source>
</evidence>
<evidence type="ECO:0000269" key="6">
    <source>
    </source>
</evidence>
<evidence type="ECO:0000269" key="7">
    <source>
    </source>
</evidence>
<evidence type="ECO:0000269" key="8">
    <source>
    </source>
</evidence>
<evidence type="ECO:0000269" key="9">
    <source>
    </source>
</evidence>
<evidence type="ECO:0000269" key="10">
    <source>
    </source>
</evidence>
<evidence type="ECO:0000303" key="11">
    <source>
    </source>
</evidence>
<evidence type="ECO:0000303" key="12">
    <source>
    </source>
</evidence>
<evidence type="ECO:0000303" key="13">
    <source>
    </source>
</evidence>
<evidence type="ECO:0000303" key="14">
    <source>
    </source>
</evidence>
<evidence type="ECO:0000303" key="15">
    <source ref="4"/>
</evidence>
<evidence type="ECO:0000305" key="16"/>
<evidence type="ECO:0007744" key="17">
    <source>
    </source>
</evidence>
<protein>
    <recommendedName>
        <fullName>Outer dense fiber protein 2</fullName>
    </recommendedName>
    <alternativeName>
        <fullName>84 kDa outer dense fiber protein</fullName>
    </alternativeName>
    <alternativeName>
        <fullName>Cenexin</fullName>
    </alternativeName>
    <alternativeName>
        <fullName>Outer dense fiber of sperm tails protein 2</fullName>
    </alternativeName>
</protein>
<name>ODFP2_RAT</name>
<dbReference type="EMBL" id="X95272">
    <property type="protein sequence ID" value="CAA64567.1"/>
    <property type="status" value="ALT_FRAME"/>
    <property type="molecule type" value="mRNA"/>
</dbReference>
<dbReference type="EMBL" id="U62821">
    <property type="protein sequence ID" value="AAC53134.1"/>
    <property type="molecule type" value="mRNA"/>
</dbReference>
<dbReference type="EMBL" id="AF053971">
    <property type="protein sequence ID" value="AAC08408.1"/>
    <property type="molecule type" value="mRNA"/>
</dbReference>
<dbReference type="EMBL" id="AF162756">
    <property type="protein sequence ID" value="AAF80473.2"/>
    <property type="molecule type" value="mRNA"/>
</dbReference>
<dbReference type="EMBL" id="AABR03024548">
    <property type="status" value="NOT_ANNOTATED_CDS"/>
    <property type="molecule type" value="Genomic_DNA"/>
</dbReference>
<dbReference type="EMBL" id="BC078857">
    <property type="protein sequence ID" value="AAH78857.1"/>
    <property type="molecule type" value="mRNA"/>
</dbReference>
<dbReference type="RefSeq" id="NP_001138477.1">
    <property type="nucleotide sequence ID" value="NM_001145005.1"/>
</dbReference>
<dbReference type="RefSeq" id="NP_058909.2">
    <molecule id="Q6AYX5-3"/>
    <property type="nucleotide sequence ID" value="NM_017213.3"/>
</dbReference>
<dbReference type="RefSeq" id="XP_017447024.1">
    <property type="nucleotide sequence ID" value="XM_017591535.1"/>
</dbReference>
<dbReference type="SMR" id="Q6AYX5"/>
<dbReference type="BioGRID" id="248121">
    <property type="interactions" value="1"/>
</dbReference>
<dbReference type="FunCoup" id="Q6AYX5">
    <property type="interactions" value="2393"/>
</dbReference>
<dbReference type="STRING" id="10116.ENSRNOP00000041336"/>
<dbReference type="iPTMnet" id="Q6AYX5"/>
<dbReference type="PhosphoSitePlus" id="Q6AYX5"/>
<dbReference type="PaxDb" id="10116-ENSRNOP00000041336"/>
<dbReference type="Ensembl" id="ENSRNOT00000041921.6">
    <molecule id="Q6AYX5-2"/>
    <property type="protein sequence ID" value="ENSRNOP00000041336.4"/>
    <property type="gene ID" value="ENSRNOG00000014584.9"/>
</dbReference>
<dbReference type="GeneID" id="29479"/>
<dbReference type="KEGG" id="rno:29479"/>
<dbReference type="UCSC" id="RGD:3229">
    <molecule id="Q6AYX5-1"/>
    <property type="organism name" value="rat"/>
</dbReference>
<dbReference type="AGR" id="RGD:3229"/>
<dbReference type="CTD" id="4957"/>
<dbReference type="RGD" id="3229">
    <property type="gene designation" value="Odf2"/>
</dbReference>
<dbReference type="VEuPathDB" id="HostDB:ENSRNOG00000014584"/>
<dbReference type="eggNOG" id="ENOG502QUXQ">
    <property type="taxonomic scope" value="Eukaryota"/>
</dbReference>
<dbReference type="GeneTree" id="ENSGT00530000063497"/>
<dbReference type="HOGENOM" id="CLU_018326_0_0_1"/>
<dbReference type="InParanoid" id="Q6AYX5"/>
<dbReference type="OrthoDB" id="413404at2759"/>
<dbReference type="PhylomeDB" id="Q6AYX5"/>
<dbReference type="Reactome" id="R-RNO-2565942">
    <property type="pathway name" value="Regulation of PLK1 Activity at G2/M Transition"/>
</dbReference>
<dbReference type="Reactome" id="R-RNO-380259">
    <property type="pathway name" value="Loss of Nlp from mitotic centrosomes"/>
</dbReference>
<dbReference type="Reactome" id="R-RNO-380270">
    <property type="pathway name" value="Recruitment of mitotic centrosome proteins and complexes"/>
</dbReference>
<dbReference type="Reactome" id="R-RNO-380284">
    <property type="pathway name" value="Loss of proteins required for interphase microtubule organization from the centrosome"/>
</dbReference>
<dbReference type="Reactome" id="R-RNO-380320">
    <property type="pathway name" value="Recruitment of NuMA to mitotic centrosomes"/>
</dbReference>
<dbReference type="Reactome" id="R-RNO-5620912">
    <property type="pathway name" value="Anchoring of the basal body to the plasma membrane"/>
</dbReference>
<dbReference type="Reactome" id="R-RNO-8854518">
    <property type="pathway name" value="AURKA Activation by TPX2"/>
</dbReference>
<dbReference type="PRO" id="PR:Q6AYX5"/>
<dbReference type="Proteomes" id="UP000002494">
    <property type="component" value="Chromosome 3"/>
</dbReference>
<dbReference type="Bgee" id="ENSRNOG00000014584">
    <property type="expression patterns" value="Expressed in testis and 20 other cell types or tissues"/>
</dbReference>
<dbReference type="ExpressionAtlas" id="Q6AYX5">
    <property type="expression patterns" value="baseline and differential"/>
</dbReference>
<dbReference type="GO" id="GO:0120103">
    <property type="term" value="C:centriolar subdistal appendage"/>
    <property type="evidence" value="ECO:0000266"/>
    <property type="project" value="RGD"/>
</dbReference>
<dbReference type="GO" id="GO:0005814">
    <property type="term" value="C:centriole"/>
    <property type="evidence" value="ECO:0000266"/>
    <property type="project" value="RGD"/>
</dbReference>
<dbReference type="GO" id="GO:0005813">
    <property type="term" value="C:centrosome"/>
    <property type="evidence" value="ECO:0000250"/>
    <property type="project" value="UniProtKB"/>
</dbReference>
<dbReference type="GO" id="GO:0097539">
    <property type="term" value="C:ciliary transition fiber"/>
    <property type="evidence" value="ECO:0000266"/>
    <property type="project" value="RGD"/>
</dbReference>
<dbReference type="GO" id="GO:0005929">
    <property type="term" value="C:cilium"/>
    <property type="evidence" value="ECO:0000266"/>
    <property type="project" value="RGD"/>
</dbReference>
<dbReference type="GO" id="GO:0005737">
    <property type="term" value="C:cytoplasm"/>
    <property type="evidence" value="ECO:0007669"/>
    <property type="project" value="UniProtKB-KW"/>
</dbReference>
<dbReference type="GO" id="GO:0005874">
    <property type="term" value="C:microtubule"/>
    <property type="evidence" value="ECO:0007669"/>
    <property type="project" value="UniProtKB-KW"/>
</dbReference>
<dbReference type="GO" id="GO:0001520">
    <property type="term" value="C:outer dense fiber"/>
    <property type="evidence" value="ECO:0000314"/>
    <property type="project" value="RGD"/>
</dbReference>
<dbReference type="GO" id="GO:0036126">
    <property type="term" value="C:sperm flagellum"/>
    <property type="evidence" value="ECO:0000266"/>
    <property type="project" value="RGD"/>
</dbReference>
<dbReference type="GO" id="GO:0097225">
    <property type="term" value="C:sperm midpiece"/>
    <property type="evidence" value="ECO:0000250"/>
    <property type="project" value="UniProtKB"/>
</dbReference>
<dbReference type="GO" id="GO:0097228">
    <property type="term" value="C:sperm principal piece"/>
    <property type="evidence" value="ECO:0000250"/>
    <property type="project" value="UniProtKB"/>
</dbReference>
<dbReference type="GO" id="GO:0000922">
    <property type="term" value="C:spindle pole"/>
    <property type="evidence" value="ECO:0007669"/>
    <property type="project" value="UniProtKB-SubCell"/>
</dbReference>
<dbReference type="GO" id="GO:0010457">
    <property type="term" value="P:centriole-centriole cohesion"/>
    <property type="evidence" value="ECO:0000266"/>
    <property type="project" value="RGD"/>
</dbReference>
<dbReference type="GO" id="GO:0044782">
    <property type="term" value="P:cilium organization"/>
    <property type="evidence" value="ECO:0000266"/>
    <property type="project" value="RGD"/>
</dbReference>
<dbReference type="GO" id="GO:0008104">
    <property type="term" value="P:protein localization"/>
    <property type="evidence" value="ECO:0000266"/>
    <property type="project" value="RGD"/>
</dbReference>
<dbReference type="GO" id="GO:1902017">
    <property type="term" value="P:regulation of cilium assembly"/>
    <property type="evidence" value="ECO:0000318"/>
    <property type="project" value="GO_Central"/>
</dbReference>
<dbReference type="GO" id="GO:0007286">
    <property type="term" value="P:spermatid development"/>
    <property type="evidence" value="ECO:0000270"/>
    <property type="project" value="RGD"/>
</dbReference>
<dbReference type="InterPro" id="IPR026099">
    <property type="entry name" value="Odf2-rel"/>
</dbReference>
<dbReference type="PANTHER" id="PTHR23162">
    <property type="entry name" value="OUTER DENSE FIBER OF SPERM TAILS 2"/>
    <property type="match status" value="1"/>
</dbReference>
<dbReference type="PANTHER" id="PTHR23162:SF8">
    <property type="entry name" value="OUTER DENSE FIBER PROTEIN 2"/>
    <property type="match status" value="1"/>
</dbReference>
<dbReference type="SUPFAM" id="SSF90257">
    <property type="entry name" value="Myosin rod fragments"/>
    <property type="match status" value="1"/>
</dbReference>
<gene>
    <name type="primary">Odf2</name>
    <name type="synonym">Odf84</name>
    <name type="ORF">KKT4</name>
</gene>